<feature type="chain" id="PRO_0000160687" description="Alcohol dehydrogenase 6">
    <location>
        <begin position="1"/>
        <end position="368"/>
    </location>
</feature>
<feature type="binding site" evidence="1">
    <location>
        <position position="47"/>
    </location>
    <ligand>
        <name>Zn(2+)</name>
        <dbReference type="ChEBI" id="CHEBI:29105"/>
        <label>1</label>
        <note>catalytic</note>
    </ligand>
</feature>
<feature type="binding site" evidence="1">
    <location>
        <position position="69"/>
    </location>
    <ligand>
        <name>Zn(2+)</name>
        <dbReference type="ChEBI" id="CHEBI:29105"/>
        <label>1</label>
        <note>catalytic</note>
    </ligand>
</feature>
<feature type="binding site" evidence="1">
    <location>
        <position position="99"/>
    </location>
    <ligand>
        <name>Zn(2+)</name>
        <dbReference type="ChEBI" id="CHEBI:29105"/>
        <label>2</label>
    </ligand>
</feature>
<feature type="binding site" evidence="1">
    <location>
        <position position="102"/>
    </location>
    <ligand>
        <name>Zn(2+)</name>
        <dbReference type="ChEBI" id="CHEBI:29105"/>
        <label>2</label>
    </ligand>
</feature>
<feature type="binding site" evidence="1">
    <location>
        <position position="105"/>
    </location>
    <ligand>
        <name>Zn(2+)</name>
        <dbReference type="ChEBI" id="CHEBI:29105"/>
        <label>2</label>
    </ligand>
</feature>
<feature type="binding site" evidence="1">
    <location>
        <position position="113"/>
    </location>
    <ligand>
        <name>Zn(2+)</name>
        <dbReference type="ChEBI" id="CHEBI:29105"/>
        <label>2</label>
    </ligand>
</feature>
<feature type="binding site" evidence="1">
    <location>
        <position position="175"/>
    </location>
    <ligand>
        <name>Zn(2+)</name>
        <dbReference type="ChEBI" id="CHEBI:29105"/>
        <label>1</label>
        <note>catalytic</note>
    </ligand>
</feature>
<feature type="binding site" evidence="1">
    <location>
        <begin position="200"/>
        <end position="205"/>
    </location>
    <ligand>
        <name>NAD(+)</name>
        <dbReference type="ChEBI" id="CHEBI:57540"/>
    </ligand>
</feature>
<feature type="binding site" evidence="1">
    <location>
        <position position="224"/>
    </location>
    <ligand>
        <name>NAD(+)</name>
        <dbReference type="ChEBI" id="CHEBI:57540"/>
    </ligand>
</feature>
<feature type="binding site" evidence="1">
    <location>
        <position position="229"/>
    </location>
    <ligand>
        <name>NAD(+)</name>
        <dbReference type="ChEBI" id="CHEBI:57540"/>
    </ligand>
</feature>
<feature type="binding site" evidence="1">
    <location>
        <begin position="293"/>
        <end position="295"/>
    </location>
    <ligand>
        <name>NAD(+)</name>
        <dbReference type="ChEBI" id="CHEBI:57540"/>
    </ligand>
</feature>
<feature type="modified residue" description="Phosphoserine" evidence="8">
    <location>
        <position position="23"/>
    </location>
</feature>
<feature type="splice variant" id="VSP_037702" description="In isoform 2." evidence="6">
    <original>W</original>
    <variation>CIRCILLL</variation>
    <location>
        <position position="368"/>
    </location>
</feature>
<feature type="sequence variant" id="VAR_022655" description="In dbSNP:rs28720152." evidence="5">
    <original>C</original>
    <variation>G</variation>
    <location>
        <position position="102"/>
    </location>
</feature>
<feature type="sequence variant" id="VAR_022656" description="In dbSNP:rs28720153." evidence="5">
    <original>I</original>
    <variation>V</variation>
    <location>
        <position position="114"/>
    </location>
</feature>
<feature type="sequence variant" id="VAR_048198" description="In dbSNP:rs34582580.">
    <original>T</original>
    <variation>P</variation>
    <location>
        <position position="151"/>
    </location>
</feature>
<feature type="sequence conflict" description="In Ref. 2; BAG52607." evidence="7" ref="2">
    <original>C</original>
    <variation>R</variation>
    <location>
        <position position="266"/>
    </location>
</feature>
<protein>
    <recommendedName>
        <fullName>Alcohol dehydrogenase 6</fullName>
        <ecNumber evidence="3">1.1.1.1</ecNumber>
    </recommendedName>
</protein>
<name>ADH6_HUMAN</name>
<organism>
    <name type="scientific">Homo sapiens</name>
    <name type="common">Human</name>
    <dbReference type="NCBI Taxonomy" id="9606"/>
    <lineage>
        <taxon>Eukaryota</taxon>
        <taxon>Metazoa</taxon>
        <taxon>Chordata</taxon>
        <taxon>Craniata</taxon>
        <taxon>Vertebrata</taxon>
        <taxon>Euteleostomi</taxon>
        <taxon>Mammalia</taxon>
        <taxon>Eutheria</taxon>
        <taxon>Euarchontoglires</taxon>
        <taxon>Primates</taxon>
        <taxon>Haplorrhini</taxon>
        <taxon>Catarrhini</taxon>
        <taxon>Hominidae</taxon>
        <taxon>Homo</taxon>
    </lineage>
</organism>
<comment type="function">
    <text evidence="1 3">Alcohol dehydrogenase (PubMed:1755855). Catalyzes the NAD-dependent oxidation of primary alcohols to the corresponding aldehydes (PubMed:1755855). Oxidizes secondary alcohols to the corresponding ketones (By similarity).</text>
</comment>
<comment type="catalytic activity">
    <reaction evidence="3">
        <text>a primary alcohol + NAD(+) = an aldehyde + NADH + H(+)</text>
        <dbReference type="Rhea" id="RHEA:10736"/>
        <dbReference type="ChEBI" id="CHEBI:15378"/>
        <dbReference type="ChEBI" id="CHEBI:15734"/>
        <dbReference type="ChEBI" id="CHEBI:17478"/>
        <dbReference type="ChEBI" id="CHEBI:57540"/>
        <dbReference type="ChEBI" id="CHEBI:57945"/>
        <dbReference type="EC" id="1.1.1.1"/>
    </reaction>
</comment>
<comment type="catalytic activity">
    <reaction evidence="1">
        <text>a secondary alcohol + NAD(+) = a ketone + NADH + H(+)</text>
        <dbReference type="Rhea" id="RHEA:10740"/>
        <dbReference type="ChEBI" id="CHEBI:15378"/>
        <dbReference type="ChEBI" id="CHEBI:17087"/>
        <dbReference type="ChEBI" id="CHEBI:35681"/>
        <dbReference type="ChEBI" id="CHEBI:57540"/>
        <dbReference type="ChEBI" id="CHEBI:57945"/>
        <dbReference type="EC" id="1.1.1.1"/>
    </reaction>
</comment>
<comment type="cofactor">
    <cofactor evidence="1">
        <name>Zn(2+)</name>
        <dbReference type="ChEBI" id="CHEBI:29105"/>
    </cofactor>
    <text evidence="1">Binds 2 Zn(2+) ions per subunit.</text>
</comment>
<comment type="activity regulation">
    <text evidence="3">Inhibited partially by pyrazole (10 mM) in the reaction mixture containing 100 mM ethanol at pH 10.0.</text>
</comment>
<comment type="biophysicochemical properties">
    <kinetics>
        <KM evidence="3">28 mM for ethanol (at pH 10.0 and 25 degrees Celsius)</KM>
        <KM evidence="3">3.2 mM for 1-propanol (at pH 10.0 and 25 degrees Celsius)</KM>
        <KM evidence="3">0.12 mM for benzyl alcohol (at pH 10.0 and 25 degrees Celsius)</KM>
    </kinetics>
    <phDependence>
        <text evidence="3">Optimum pH is 10.0.</text>
    </phDependence>
</comment>
<comment type="subunit">
    <text evidence="2">Dimer.</text>
</comment>
<comment type="subcellular location">
    <subcellularLocation>
        <location>Cytoplasm</location>
    </subcellularLocation>
</comment>
<comment type="alternative products">
    <event type="alternative splicing"/>
    <isoform>
        <id>P28332-1</id>
        <name>1</name>
        <sequence type="displayed"/>
    </isoform>
    <isoform>
        <id>P28332-2</id>
        <name>2</name>
        <sequence type="described" ref="VSP_037702"/>
    </isoform>
</comment>
<comment type="tissue specificity">
    <text evidence="4">Stomach and liver.</text>
</comment>
<comment type="miscellaneous">
    <text>There are 7 different ADH's isozymes in human: three belongs to class-I: alpha, beta, and gamma, one to class-II: pi, one to class-III: chi, one to class-IV: ADH7 and one to class-V: ADH6.</text>
</comment>
<comment type="miscellaneous">
    <text evidence="3">Isoelectric point (pH(I)) is 8.6.</text>
</comment>
<comment type="similarity">
    <text evidence="7">Belongs to the zinc-containing alcohol dehydrogenase family. Class-V subfamily.</text>
</comment>
<reference key="1">
    <citation type="journal article" date="1991" name="Proc. Natl. Acad. Sci. U.S.A.">
        <title>A human alcohol dehydrogenase gene (ADH6) encoding an additional class of isozyme.</title>
        <authorList>
            <person name="Yasunami M."/>
            <person name="Chen C.-S."/>
            <person name="Yoshida A."/>
        </authorList>
    </citation>
    <scope>NUCLEOTIDE SEQUENCE [GENOMIC DNA]</scope>
    <scope>TISSUE SPECIFICITY</scope>
    <source>
        <tissue>Liver</tissue>
    </source>
</reference>
<reference key="2">
    <citation type="journal article" date="2004" name="Nat. Genet.">
        <title>Complete sequencing and characterization of 21,243 full-length human cDNAs.</title>
        <authorList>
            <person name="Ota T."/>
            <person name="Suzuki Y."/>
            <person name="Nishikawa T."/>
            <person name="Otsuki T."/>
            <person name="Sugiyama T."/>
            <person name="Irie R."/>
            <person name="Wakamatsu A."/>
            <person name="Hayashi K."/>
            <person name="Sato H."/>
            <person name="Nagai K."/>
            <person name="Kimura K."/>
            <person name="Makita H."/>
            <person name="Sekine M."/>
            <person name="Obayashi M."/>
            <person name="Nishi T."/>
            <person name="Shibahara T."/>
            <person name="Tanaka T."/>
            <person name="Ishii S."/>
            <person name="Yamamoto J."/>
            <person name="Saito K."/>
            <person name="Kawai Y."/>
            <person name="Isono Y."/>
            <person name="Nakamura Y."/>
            <person name="Nagahari K."/>
            <person name="Murakami K."/>
            <person name="Yasuda T."/>
            <person name="Iwayanagi T."/>
            <person name="Wagatsuma M."/>
            <person name="Shiratori A."/>
            <person name="Sudo H."/>
            <person name="Hosoiri T."/>
            <person name="Kaku Y."/>
            <person name="Kodaira H."/>
            <person name="Kondo H."/>
            <person name="Sugawara M."/>
            <person name="Takahashi M."/>
            <person name="Kanda K."/>
            <person name="Yokoi T."/>
            <person name="Furuya T."/>
            <person name="Kikkawa E."/>
            <person name="Omura Y."/>
            <person name="Abe K."/>
            <person name="Kamihara K."/>
            <person name="Katsuta N."/>
            <person name="Sato K."/>
            <person name="Tanikawa M."/>
            <person name="Yamazaki M."/>
            <person name="Ninomiya K."/>
            <person name="Ishibashi T."/>
            <person name="Yamashita H."/>
            <person name="Murakawa K."/>
            <person name="Fujimori K."/>
            <person name="Tanai H."/>
            <person name="Kimata M."/>
            <person name="Watanabe M."/>
            <person name="Hiraoka S."/>
            <person name="Chiba Y."/>
            <person name="Ishida S."/>
            <person name="Ono Y."/>
            <person name="Takiguchi S."/>
            <person name="Watanabe S."/>
            <person name="Yosida M."/>
            <person name="Hotuta T."/>
            <person name="Kusano J."/>
            <person name="Kanehori K."/>
            <person name="Takahashi-Fujii A."/>
            <person name="Hara H."/>
            <person name="Tanase T.-O."/>
            <person name="Nomura Y."/>
            <person name="Togiya S."/>
            <person name="Komai F."/>
            <person name="Hara R."/>
            <person name="Takeuchi K."/>
            <person name="Arita M."/>
            <person name="Imose N."/>
            <person name="Musashino K."/>
            <person name="Yuuki H."/>
            <person name="Oshima A."/>
            <person name="Sasaki N."/>
            <person name="Aotsuka S."/>
            <person name="Yoshikawa Y."/>
            <person name="Matsunawa H."/>
            <person name="Ichihara T."/>
            <person name="Shiohata N."/>
            <person name="Sano S."/>
            <person name="Moriya S."/>
            <person name="Momiyama H."/>
            <person name="Satoh N."/>
            <person name="Takami S."/>
            <person name="Terashima Y."/>
            <person name="Suzuki O."/>
            <person name="Nakagawa S."/>
            <person name="Senoh A."/>
            <person name="Mizoguchi H."/>
            <person name="Goto Y."/>
            <person name="Shimizu F."/>
            <person name="Wakebe H."/>
            <person name="Hishigaki H."/>
            <person name="Watanabe T."/>
            <person name="Sugiyama A."/>
            <person name="Takemoto M."/>
            <person name="Kawakami B."/>
            <person name="Yamazaki M."/>
            <person name="Watanabe K."/>
            <person name="Kumagai A."/>
            <person name="Itakura S."/>
            <person name="Fukuzumi Y."/>
            <person name="Fujimori Y."/>
            <person name="Komiyama M."/>
            <person name="Tashiro H."/>
            <person name="Tanigami A."/>
            <person name="Fujiwara T."/>
            <person name="Ono T."/>
            <person name="Yamada K."/>
            <person name="Fujii Y."/>
            <person name="Ozaki K."/>
            <person name="Hirao M."/>
            <person name="Ohmori Y."/>
            <person name="Kawabata A."/>
            <person name="Hikiji T."/>
            <person name="Kobatake N."/>
            <person name="Inagaki H."/>
            <person name="Ikema Y."/>
            <person name="Okamoto S."/>
            <person name="Okitani R."/>
            <person name="Kawakami T."/>
            <person name="Noguchi S."/>
            <person name="Itoh T."/>
            <person name="Shigeta K."/>
            <person name="Senba T."/>
            <person name="Matsumura K."/>
            <person name="Nakajima Y."/>
            <person name="Mizuno T."/>
            <person name="Morinaga M."/>
            <person name="Sasaki M."/>
            <person name="Togashi T."/>
            <person name="Oyama M."/>
            <person name="Hata H."/>
            <person name="Watanabe M."/>
            <person name="Komatsu T."/>
            <person name="Mizushima-Sugano J."/>
            <person name="Satoh T."/>
            <person name="Shirai Y."/>
            <person name="Takahashi Y."/>
            <person name="Nakagawa K."/>
            <person name="Okumura K."/>
            <person name="Nagase T."/>
            <person name="Nomura N."/>
            <person name="Kikuchi H."/>
            <person name="Masuho Y."/>
            <person name="Yamashita R."/>
            <person name="Nakai K."/>
            <person name="Yada T."/>
            <person name="Nakamura Y."/>
            <person name="Ohara O."/>
            <person name="Isogai T."/>
            <person name="Sugano S."/>
        </authorList>
    </citation>
    <scope>NUCLEOTIDE SEQUENCE [LARGE SCALE MRNA] (ISOFORM 2)</scope>
    <source>
        <tissue>Small intestine</tissue>
    </source>
</reference>
<reference key="3">
    <citation type="submission" date="2005-03" db="EMBL/GenBank/DDBJ databases">
        <authorList>
            <consortium name="NIEHS SNPs program"/>
        </authorList>
    </citation>
    <scope>NUCLEOTIDE SEQUENCE [GENOMIC DNA]</scope>
    <scope>VARIANTS GLY-102 AND VAL-114</scope>
</reference>
<reference key="4">
    <citation type="journal article" date="2005" name="Nature">
        <title>Generation and annotation of the DNA sequences of human chromosomes 2 and 4.</title>
        <authorList>
            <person name="Hillier L.W."/>
            <person name="Graves T.A."/>
            <person name="Fulton R.S."/>
            <person name="Fulton L.A."/>
            <person name="Pepin K.H."/>
            <person name="Minx P."/>
            <person name="Wagner-McPherson C."/>
            <person name="Layman D."/>
            <person name="Wylie K."/>
            <person name="Sekhon M."/>
            <person name="Becker M.C."/>
            <person name="Fewell G.A."/>
            <person name="Delehaunty K.D."/>
            <person name="Miner T.L."/>
            <person name="Nash W.E."/>
            <person name="Kremitzki C."/>
            <person name="Oddy L."/>
            <person name="Du H."/>
            <person name="Sun H."/>
            <person name="Bradshaw-Cordum H."/>
            <person name="Ali J."/>
            <person name="Carter J."/>
            <person name="Cordes M."/>
            <person name="Harris A."/>
            <person name="Isak A."/>
            <person name="van Brunt A."/>
            <person name="Nguyen C."/>
            <person name="Du F."/>
            <person name="Courtney L."/>
            <person name="Kalicki J."/>
            <person name="Ozersky P."/>
            <person name="Abbott S."/>
            <person name="Armstrong J."/>
            <person name="Belter E.A."/>
            <person name="Caruso L."/>
            <person name="Cedroni M."/>
            <person name="Cotton M."/>
            <person name="Davidson T."/>
            <person name="Desai A."/>
            <person name="Elliott G."/>
            <person name="Erb T."/>
            <person name="Fronick C."/>
            <person name="Gaige T."/>
            <person name="Haakenson W."/>
            <person name="Haglund K."/>
            <person name="Holmes A."/>
            <person name="Harkins R."/>
            <person name="Kim K."/>
            <person name="Kruchowski S.S."/>
            <person name="Strong C.M."/>
            <person name="Grewal N."/>
            <person name="Goyea E."/>
            <person name="Hou S."/>
            <person name="Levy A."/>
            <person name="Martinka S."/>
            <person name="Mead K."/>
            <person name="McLellan M.D."/>
            <person name="Meyer R."/>
            <person name="Randall-Maher J."/>
            <person name="Tomlinson C."/>
            <person name="Dauphin-Kohlberg S."/>
            <person name="Kozlowicz-Reilly A."/>
            <person name="Shah N."/>
            <person name="Swearengen-Shahid S."/>
            <person name="Snider J."/>
            <person name="Strong J.T."/>
            <person name="Thompson J."/>
            <person name="Yoakum M."/>
            <person name="Leonard S."/>
            <person name="Pearman C."/>
            <person name="Trani L."/>
            <person name="Radionenko M."/>
            <person name="Waligorski J.E."/>
            <person name="Wang C."/>
            <person name="Rock S.M."/>
            <person name="Tin-Wollam A.-M."/>
            <person name="Maupin R."/>
            <person name="Latreille P."/>
            <person name="Wendl M.C."/>
            <person name="Yang S.-P."/>
            <person name="Pohl C."/>
            <person name="Wallis J.W."/>
            <person name="Spieth J."/>
            <person name="Bieri T.A."/>
            <person name="Berkowicz N."/>
            <person name="Nelson J.O."/>
            <person name="Osborne J."/>
            <person name="Ding L."/>
            <person name="Meyer R."/>
            <person name="Sabo A."/>
            <person name="Shotland Y."/>
            <person name="Sinha P."/>
            <person name="Wohldmann P.E."/>
            <person name="Cook L.L."/>
            <person name="Hickenbotham M.T."/>
            <person name="Eldred J."/>
            <person name="Williams D."/>
            <person name="Jones T.A."/>
            <person name="She X."/>
            <person name="Ciccarelli F.D."/>
            <person name="Izaurralde E."/>
            <person name="Taylor J."/>
            <person name="Schmutz J."/>
            <person name="Myers R.M."/>
            <person name="Cox D.R."/>
            <person name="Huang X."/>
            <person name="McPherson J.D."/>
            <person name="Mardis E.R."/>
            <person name="Clifton S.W."/>
            <person name="Warren W.C."/>
            <person name="Chinwalla A.T."/>
            <person name="Eddy S.R."/>
            <person name="Marra M.A."/>
            <person name="Ovcharenko I."/>
            <person name="Furey T.S."/>
            <person name="Miller W."/>
            <person name="Eichler E.E."/>
            <person name="Bork P."/>
            <person name="Suyama M."/>
            <person name="Torrents D."/>
            <person name="Waterston R.H."/>
            <person name="Wilson R.K."/>
        </authorList>
    </citation>
    <scope>NUCLEOTIDE SEQUENCE [LARGE SCALE GENOMIC DNA]</scope>
</reference>
<reference key="5">
    <citation type="journal article" date="1991" name="Biochem. Biophys. Res. Commun.">
        <title>Enzymatic properties of the protein encoded by newly cloned human alcohol dehydrogenase ADH6 gene.</title>
        <authorList>
            <person name="Chen C.S."/>
            <person name="Yoshida A."/>
        </authorList>
    </citation>
    <scope>FUNCTION</scope>
    <scope>CATALYTIC ACTIVITY</scope>
    <scope>ACTIVITY REGULATION</scope>
    <scope>BIOPHYSICOCHEMICAL PROPERTIES</scope>
</reference>
<reference key="6">
    <citation type="journal article" date="2014" name="J. Proteomics">
        <title>An enzyme assisted RP-RPLC approach for in-depth analysis of human liver phosphoproteome.</title>
        <authorList>
            <person name="Bian Y."/>
            <person name="Song C."/>
            <person name="Cheng K."/>
            <person name="Dong M."/>
            <person name="Wang F."/>
            <person name="Huang J."/>
            <person name="Sun D."/>
            <person name="Wang L."/>
            <person name="Ye M."/>
            <person name="Zou H."/>
        </authorList>
    </citation>
    <scope>PHOSPHORYLATION [LARGE SCALE ANALYSIS] AT SER-23</scope>
    <scope>IDENTIFICATION BY MASS SPECTROMETRY [LARGE SCALE ANALYSIS]</scope>
    <source>
        <tissue>Liver</tissue>
    </source>
</reference>
<proteinExistence type="evidence at protein level"/>
<keyword id="KW-0025">Alternative splicing</keyword>
<keyword id="KW-0963">Cytoplasm</keyword>
<keyword id="KW-0479">Metal-binding</keyword>
<keyword id="KW-0520">NAD</keyword>
<keyword id="KW-0560">Oxidoreductase</keyword>
<keyword id="KW-0597">Phosphoprotein</keyword>
<keyword id="KW-1267">Proteomics identification</keyword>
<keyword id="KW-1185">Reference proteome</keyword>
<keyword id="KW-0862">Zinc</keyword>
<sequence length="368" mass="39073">MSTTGQVIRCKAAILWKPGAPFSIEEVEVAPPKAKEVRIKVVATGLCGTEMKVLGSKHLDLLYPTILGHEGAGIVESIGEGVSTVKPGDKVITLFLPQCGECTSCLNSEGNFCIQFKQSKTQLMSDGTSRFTCKGKSIYHFGNTSTFCEYTVIKEISVAKIDAVAPLEKVCLISCGFSTGFGAAINTAKVTPGSTCAVFGLGGVGLSVVMGCKAAGAARIIGVDVNKEKFKKAQELGATECLNPQDLKKPIQEVLFDMTDAGIDFCFEAIGNLDVLAAALASCNESYGVCVVVGVLPASVQLKISGQLFFSGRSLKGSVFGGWKSRQHIPKLVADYMAEKLNLDPLITHTLNLDKINEAVELMKTGKW</sequence>
<evidence type="ECO:0000250" key="1">
    <source>
        <dbReference type="UniProtKB" id="P07327"/>
    </source>
</evidence>
<evidence type="ECO:0000250" key="2">
    <source>
        <dbReference type="UniProtKB" id="P41681"/>
    </source>
</evidence>
<evidence type="ECO:0000269" key="3">
    <source>
    </source>
</evidence>
<evidence type="ECO:0000269" key="4">
    <source>
    </source>
</evidence>
<evidence type="ECO:0000269" key="5">
    <source ref="3"/>
</evidence>
<evidence type="ECO:0000303" key="6">
    <source>
    </source>
</evidence>
<evidence type="ECO:0000305" key="7"/>
<evidence type="ECO:0007744" key="8">
    <source>
    </source>
</evidence>
<accession>P28332</accession>
<accession>A0A0A0MS56</accession>
<accession>B3KS45</accession>
<accession>Q58F53</accession>
<dbReference type="EC" id="1.1.1.1" evidence="3"/>
<dbReference type="EMBL" id="M84402">
    <property type="protein sequence ID" value="AAA35509.1"/>
    <property type="molecule type" value="Genomic_DNA"/>
</dbReference>
<dbReference type="EMBL" id="M84403">
    <property type="protein sequence ID" value="AAA35509.1"/>
    <property type="status" value="JOINED"/>
    <property type="molecule type" value="Genomic_DNA"/>
</dbReference>
<dbReference type="EMBL" id="M84404">
    <property type="protein sequence ID" value="AAA35509.1"/>
    <property type="status" value="JOINED"/>
    <property type="molecule type" value="Genomic_DNA"/>
</dbReference>
<dbReference type="EMBL" id="M84405">
    <property type="protein sequence ID" value="AAA35509.1"/>
    <property type="status" value="JOINED"/>
    <property type="molecule type" value="Genomic_DNA"/>
</dbReference>
<dbReference type="EMBL" id="M84406">
    <property type="protein sequence ID" value="AAA35509.1"/>
    <property type="status" value="JOINED"/>
    <property type="molecule type" value="Genomic_DNA"/>
</dbReference>
<dbReference type="EMBL" id="M84407">
    <property type="protein sequence ID" value="AAA35509.1"/>
    <property type="status" value="JOINED"/>
    <property type="molecule type" value="Genomic_DNA"/>
</dbReference>
<dbReference type="EMBL" id="M84408">
    <property type="protein sequence ID" value="AAA35509.1"/>
    <property type="status" value="JOINED"/>
    <property type="molecule type" value="Genomic_DNA"/>
</dbReference>
<dbReference type="EMBL" id="M84409">
    <property type="protein sequence ID" value="AAA35509.1"/>
    <property type="status" value="JOINED"/>
    <property type="molecule type" value="Genomic_DNA"/>
</dbReference>
<dbReference type="EMBL" id="AK092768">
    <property type="protein sequence ID" value="BAG52607.1"/>
    <property type="molecule type" value="mRNA"/>
</dbReference>
<dbReference type="EMBL" id="AY962311">
    <property type="protein sequence ID" value="AAX44051.1"/>
    <property type="molecule type" value="Genomic_DNA"/>
</dbReference>
<dbReference type="EMBL" id="AP002026">
    <property type="status" value="NOT_ANNOTATED_CDS"/>
    <property type="molecule type" value="Genomic_DNA"/>
</dbReference>
<dbReference type="EMBL" id="KF457794">
    <property type="status" value="NOT_ANNOTATED_CDS"/>
    <property type="molecule type" value="Genomic_DNA"/>
</dbReference>
<dbReference type="CCDS" id="CCDS3647.1">
    <molecule id="P28332-1"/>
</dbReference>
<dbReference type="CCDS" id="CCDS43255.1">
    <molecule id="P28332-2"/>
</dbReference>
<dbReference type="PIR" id="A41274">
    <property type="entry name" value="DEHUA6"/>
</dbReference>
<dbReference type="RefSeq" id="NP_000663.1">
    <molecule id="P28332-1"/>
    <property type="nucleotide sequence ID" value="NM_000672.4"/>
</dbReference>
<dbReference type="RefSeq" id="NP_001095940.1">
    <molecule id="P28332-2"/>
    <property type="nucleotide sequence ID" value="NM_001102470.2"/>
</dbReference>
<dbReference type="SMR" id="P28332"/>
<dbReference type="BioGRID" id="106642">
    <property type="interactions" value="11"/>
</dbReference>
<dbReference type="FunCoup" id="P28332">
    <property type="interactions" value="247"/>
</dbReference>
<dbReference type="IntAct" id="P28332">
    <property type="interactions" value="9"/>
</dbReference>
<dbReference type="STRING" id="9606.ENSP00000378359"/>
<dbReference type="ChEMBL" id="CHEMBL2096668"/>
<dbReference type="DrugBank" id="DB01048">
    <property type="generic name" value="Abacavir"/>
</dbReference>
<dbReference type="DrugBank" id="DB00898">
    <property type="generic name" value="Ethanol"/>
</dbReference>
<dbReference type="DrugBank" id="DB00157">
    <property type="generic name" value="NADH"/>
</dbReference>
<dbReference type="GlyGen" id="P28332">
    <property type="glycosylation" value="2 sites, 1 O-linked glycan (1 site)"/>
</dbReference>
<dbReference type="iPTMnet" id="P28332"/>
<dbReference type="PhosphoSitePlus" id="P28332"/>
<dbReference type="BioMuta" id="ADH6"/>
<dbReference type="DMDM" id="254763246"/>
<dbReference type="jPOST" id="P28332"/>
<dbReference type="MassIVE" id="P28332"/>
<dbReference type="PaxDb" id="9606-ENSP00000378359"/>
<dbReference type="PeptideAtlas" id="P28332"/>
<dbReference type="ProteomicsDB" id="54474">
    <molecule id="P28332-1"/>
</dbReference>
<dbReference type="ProteomicsDB" id="54475">
    <molecule id="P28332-2"/>
</dbReference>
<dbReference type="Antibodypedia" id="14841">
    <property type="antibodies" value="163 antibodies from 27 providers"/>
</dbReference>
<dbReference type="DNASU" id="130"/>
<dbReference type="Ensembl" id="ENST00000237653.11">
    <molecule id="P28332-1"/>
    <property type="protein sequence ID" value="ENSP00000237653.7"/>
    <property type="gene ID" value="ENSG00000172955.17"/>
</dbReference>
<dbReference type="Ensembl" id="ENST00000394899.6">
    <molecule id="P28332-2"/>
    <property type="protein sequence ID" value="ENSP00000378359.2"/>
    <property type="gene ID" value="ENSG00000172955.17"/>
</dbReference>
<dbReference type="GeneID" id="130"/>
<dbReference type="KEGG" id="hsa:130"/>
<dbReference type="MANE-Select" id="ENST00000394899.6">
    <molecule id="P28332-2"/>
    <property type="protein sequence ID" value="ENSP00000378359.2"/>
    <property type="RefSeq nucleotide sequence ID" value="NM_001102470.2"/>
    <property type="RefSeq protein sequence ID" value="NP_001095940.1"/>
</dbReference>
<dbReference type="UCSC" id="uc003hup.5">
    <molecule id="P28332-1"/>
    <property type="organism name" value="human"/>
</dbReference>
<dbReference type="AGR" id="HGNC:255"/>
<dbReference type="CTD" id="130"/>
<dbReference type="DisGeNET" id="130"/>
<dbReference type="GeneCards" id="ADH6"/>
<dbReference type="HGNC" id="HGNC:255">
    <property type="gene designation" value="ADH6"/>
</dbReference>
<dbReference type="HPA" id="ENSG00000172955">
    <property type="expression patterns" value="Tissue enriched (liver)"/>
</dbReference>
<dbReference type="MIM" id="103735">
    <property type="type" value="gene"/>
</dbReference>
<dbReference type="neXtProt" id="NX_P28332"/>
<dbReference type="OpenTargets" id="ENSG00000172955"/>
<dbReference type="PharmGKB" id="PA24576"/>
<dbReference type="VEuPathDB" id="HostDB:ENSG00000172955"/>
<dbReference type="eggNOG" id="KOG0022">
    <property type="taxonomic scope" value="Eukaryota"/>
</dbReference>
<dbReference type="GeneTree" id="ENSGT00940000163645"/>
<dbReference type="HOGENOM" id="CLU_026673_14_0_1"/>
<dbReference type="InParanoid" id="P28332"/>
<dbReference type="OMA" id="QVNEGYQ"/>
<dbReference type="OrthoDB" id="417550at2759"/>
<dbReference type="PAN-GO" id="P28332">
    <property type="GO annotations" value="7 GO annotations based on evolutionary models"/>
</dbReference>
<dbReference type="PhylomeDB" id="P28332"/>
<dbReference type="TreeFam" id="TF300429"/>
<dbReference type="PathwayCommons" id="P28332"/>
<dbReference type="Reactome" id="R-HSA-71384">
    <property type="pathway name" value="Ethanol oxidation"/>
</dbReference>
<dbReference type="SignaLink" id="P28332"/>
<dbReference type="BioGRID-ORCS" id="130">
    <property type="hits" value="14 hits in 1150 CRISPR screens"/>
</dbReference>
<dbReference type="GeneWiki" id="ADH6"/>
<dbReference type="GenomeRNAi" id="130"/>
<dbReference type="Pharos" id="P28332">
    <property type="development level" value="Tbio"/>
</dbReference>
<dbReference type="PRO" id="PR:P28332"/>
<dbReference type="Proteomes" id="UP000005640">
    <property type="component" value="Chromosome 4"/>
</dbReference>
<dbReference type="RNAct" id="P28332">
    <property type="molecule type" value="protein"/>
</dbReference>
<dbReference type="Bgee" id="ENSG00000172955">
    <property type="expression patterns" value="Expressed in right lobe of liver and 113 other cell types or tissues"/>
</dbReference>
<dbReference type="ExpressionAtlas" id="P28332">
    <property type="expression patterns" value="baseline and differential"/>
</dbReference>
<dbReference type="GO" id="GO:0005829">
    <property type="term" value="C:cytosol"/>
    <property type="evidence" value="ECO:0000318"/>
    <property type="project" value="GO_Central"/>
</dbReference>
<dbReference type="GO" id="GO:0070062">
    <property type="term" value="C:extracellular exosome"/>
    <property type="evidence" value="ECO:0007005"/>
    <property type="project" value="UniProtKB"/>
</dbReference>
<dbReference type="GO" id="GO:0004022">
    <property type="term" value="F:alcohol dehydrogenase (NAD+) activity"/>
    <property type="evidence" value="ECO:0000314"/>
    <property type="project" value="UniProtKB"/>
</dbReference>
<dbReference type="GO" id="GO:0004745">
    <property type="term" value="F:all-trans-retinol dehydrogenase (NAD+) activity"/>
    <property type="evidence" value="ECO:0000318"/>
    <property type="project" value="GO_Central"/>
</dbReference>
<dbReference type="GO" id="GO:0008270">
    <property type="term" value="F:zinc ion binding"/>
    <property type="evidence" value="ECO:0000318"/>
    <property type="project" value="GO_Central"/>
</dbReference>
<dbReference type="GO" id="GO:0042573">
    <property type="term" value="P:retinoic acid metabolic process"/>
    <property type="evidence" value="ECO:0000318"/>
    <property type="project" value="GO_Central"/>
</dbReference>
<dbReference type="GO" id="GO:0042572">
    <property type="term" value="P:retinol metabolic process"/>
    <property type="evidence" value="ECO:0000318"/>
    <property type="project" value="GO_Central"/>
</dbReference>
<dbReference type="CDD" id="cd08299">
    <property type="entry name" value="alcohol_DH_class_I_II_IV"/>
    <property type="match status" value="1"/>
</dbReference>
<dbReference type="FunFam" id="3.90.180.10:FF:000007">
    <property type="entry name" value="Alcohol dehydrogenase 6"/>
    <property type="match status" value="1"/>
</dbReference>
<dbReference type="FunFam" id="3.40.50.720:FF:000003">
    <property type="entry name" value="S-(hydroxymethyl)glutathione dehydrogenase"/>
    <property type="match status" value="1"/>
</dbReference>
<dbReference type="Gene3D" id="3.90.180.10">
    <property type="entry name" value="Medium-chain alcohol dehydrogenases, catalytic domain"/>
    <property type="match status" value="1"/>
</dbReference>
<dbReference type="Gene3D" id="3.40.50.720">
    <property type="entry name" value="NAD(P)-binding Rossmann-like Domain"/>
    <property type="match status" value="1"/>
</dbReference>
<dbReference type="InterPro" id="IPR013149">
    <property type="entry name" value="ADH-like_C"/>
</dbReference>
<dbReference type="InterPro" id="IPR013154">
    <property type="entry name" value="ADH-like_N"/>
</dbReference>
<dbReference type="InterPro" id="IPR002328">
    <property type="entry name" value="ADH_Zn_CS"/>
</dbReference>
<dbReference type="InterPro" id="IPR011032">
    <property type="entry name" value="GroES-like_sf"/>
</dbReference>
<dbReference type="InterPro" id="IPR036291">
    <property type="entry name" value="NAD(P)-bd_dom_sf"/>
</dbReference>
<dbReference type="InterPro" id="IPR020843">
    <property type="entry name" value="PKS_ER"/>
</dbReference>
<dbReference type="PANTHER" id="PTHR43880">
    <property type="entry name" value="ALCOHOL DEHYDROGENASE"/>
    <property type="match status" value="1"/>
</dbReference>
<dbReference type="PANTHER" id="PTHR43880:SF20">
    <property type="entry name" value="ALCOHOL DEHYDROGENASE 6"/>
    <property type="match status" value="1"/>
</dbReference>
<dbReference type="Pfam" id="PF08240">
    <property type="entry name" value="ADH_N"/>
    <property type="match status" value="1"/>
</dbReference>
<dbReference type="Pfam" id="PF00107">
    <property type="entry name" value="ADH_zinc_N"/>
    <property type="match status" value="1"/>
</dbReference>
<dbReference type="SMART" id="SM00829">
    <property type="entry name" value="PKS_ER"/>
    <property type="match status" value="1"/>
</dbReference>
<dbReference type="SUPFAM" id="SSF50129">
    <property type="entry name" value="GroES-like"/>
    <property type="match status" value="2"/>
</dbReference>
<dbReference type="SUPFAM" id="SSF51735">
    <property type="entry name" value="NAD(P)-binding Rossmann-fold domains"/>
    <property type="match status" value="1"/>
</dbReference>
<dbReference type="PROSITE" id="PS00059">
    <property type="entry name" value="ADH_ZINC"/>
    <property type="match status" value="1"/>
</dbReference>
<gene>
    <name type="primary">ADH6</name>
</gene>